<accession>Q98N67</accession>
<keyword id="KW-0687">Ribonucleoprotein</keyword>
<keyword id="KW-0689">Ribosomal protein</keyword>
<gene>
    <name evidence="1" type="primary">rplL</name>
    <name type="ordered locus">mlr0275</name>
</gene>
<dbReference type="EMBL" id="BA000012">
    <property type="protein sequence ID" value="BAB47895.1"/>
    <property type="molecule type" value="Genomic_DNA"/>
</dbReference>
<dbReference type="RefSeq" id="WP_010909265.1">
    <property type="nucleotide sequence ID" value="NC_002678.2"/>
</dbReference>
<dbReference type="SMR" id="Q98N67"/>
<dbReference type="GeneID" id="66684228"/>
<dbReference type="KEGG" id="mlo:mlr0275"/>
<dbReference type="eggNOG" id="COG0222">
    <property type="taxonomic scope" value="Bacteria"/>
</dbReference>
<dbReference type="HOGENOM" id="CLU_086499_3_0_5"/>
<dbReference type="Proteomes" id="UP000000552">
    <property type="component" value="Chromosome"/>
</dbReference>
<dbReference type="GO" id="GO:0022625">
    <property type="term" value="C:cytosolic large ribosomal subunit"/>
    <property type="evidence" value="ECO:0007669"/>
    <property type="project" value="TreeGrafter"/>
</dbReference>
<dbReference type="GO" id="GO:0003729">
    <property type="term" value="F:mRNA binding"/>
    <property type="evidence" value="ECO:0007669"/>
    <property type="project" value="TreeGrafter"/>
</dbReference>
<dbReference type="GO" id="GO:0003735">
    <property type="term" value="F:structural constituent of ribosome"/>
    <property type="evidence" value="ECO:0007669"/>
    <property type="project" value="InterPro"/>
</dbReference>
<dbReference type="GO" id="GO:0006412">
    <property type="term" value="P:translation"/>
    <property type="evidence" value="ECO:0007669"/>
    <property type="project" value="UniProtKB-UniRule"/>
</dbReference>
<dbReference type="CDD" id="cd00387">
    <property type="entry name" value="Ribosomal_L7_L12"/>
    <property type="match status" value="1"/>
</dbReference>
<dbReference type="FunFam" id="1.20.5.710:FF:000007">
    <property type="entry name" value="50S ribosomal protein L7/L12"/>
    <property type="match status" value="1"/>
</dbReference>
<dbReference type="FunFam" id="3.30.1390.10:FF:000001">
    <property type="entry name" value="50S ribosomal protein L7/L12"/>
    <property type="match status" value="1"/>
</dbReference>
<dbReference type="Gene3D" id="3.30.1390.10">
    <property type="match status" value="1"/>
</dbReference>
<dbReference type="Gene3D" id="1.20.5.710">
    <property type="entry name" value="Single helix bin"/>
    <property type="match status" value="1"/>
</dbReference>
<dbReference type="HAMAP" id="MF_00368">
    <property type="entry name" value="Ribosomal_bL12"/>
    <property type="match status" value="1"/>
</dbReference>
<dbReference type="InterPro" id="IPR000206">
    <property type="entry name" value="Ribosomal_bL12"/>
</dbReference>
<dbReference type="InterPro" id="IPR013823">
    <property type="entry name" value="Ribosomal_bL12_C"/>
</dbReference>
<dbReference type="InterPro" id="IPR014719">
    <property type="entry name" value="Ribosomal_bL12_C/ClpS-like"/>
</dbReference>
<dbReference type="InterPro" id="IPR008932">
    <property type="entry name" value="Ribosomal_bL12_oligo"/>
</dbReference>
<dbReference type="InterPro" id="IPR036235">
    <property type="entry name" value="Ribosomal_bL12_oligo_N_sf"/>
</dbReference>
<dbReference type="NCBIfam" id="TIGR00855">
    <property type="entry name" value="L12"/>
    <property type="match status" value="1"/>
</dbReference>
<dbReference type="PANTHER" id="PTHR45987">
    <property type="entry name" value="39S RIBOSOMAL PROTEIN L12"/>
    <property type="match status" value="1"/>
</dbReference>
<dbReference type="PANTHER" id="PTHR45987:SF4">
    <property type="entry name" value="LARGE RIBOSOMAL SUBUNIT PROTEIN BL12M"/>
    <property type="match status" value="1"/>
</dbReference>
<dbReference type="Pfam" id="PF00542">
    <property type="entry name" value="Ribosomal_L12"/>
    <property type="match status" value="1"/>
</dbReference>
<dbReference type="Pfam" id="PF16320">
    <property type="entry name" value="Ribosomal_L12_N"/>
    <property type="match status" value="1"/>
</dbReference>
<dbReference type="SUPFAM" id="SSF54736">
    <property type="entry name" value="ClpS-like"/>
    <property type="match status" value="1"/>
</dbReference>
<dbReference type="SUPFAM" id="SSF48300">
    <property type="entry name" value="Ribosomal protein L7/12, oligomerisation (N-terminal) domain"/>
    <property type="match status" value="1"/>
</dbReference>
<organism>
    <name type="scientific">Mesorhizobium japonicum (strain LMG 29417 / CECT 9101 / MAFF 303099)</name>
    <name type="common">Mesorhizobium loti (strain MAFF 303099)</name>
    <dbReference type="NCBI Taxonomy" id="266835"/>
    <lineage>
        <taxon>Bacteria</taxon>
        <taxon>Pseudomonadati</taxon>
        <taxon>Pseudomonadota</taxon>
        <taxon>Alphaproteobacteria</taxon>
        <taxon>Hyphomicrobiales</taxon>
        <taxon>Phyllobacteriaceae</taxon>
        <taxon>Mesorhizobium</taxon>
    </lineage>
</organism>
<protein>
    <recommendedName>
        <fullName evidence="1">Large ribosomal subunit protein bL12</fullName>
    </recommendedName>
    <alternativeName>
        <fullName evidence="2">50S ribosomal protein L7/L12</fullName>
    </alternativeName>
</protein>
<proteinExistence type="inferred from homology"/>
<evidence type="ECO:0000255" key="1">
    <source>
        <dbReference type="HAMAP-Rule" id="MF_00368"/>
    </source>
</evidence>
<evidence type="ECO:0000305" key="2"/>
<name>RL7_RHILO</name>
<comment type="function">
    <text evidence="1">Forms part of the ribosomal stalk which helps the ribosome interact with GTP-bound translation factors. Is thus essential for accurate translation.</text>
</comment>
<comment type="subunit">
    <text evidence="1">Homodimer. Part of the ribosomal stalk of the 50S ribosomal subunit. Forms a multimeric L10(L12)X complex, where L10 forms an elongated spine to which 2 to 4 L12 dimers bind in a sequential fashion. Binds GTP-bound translation factors.</text>
</comment>
<comment type="similarity">
    <text evidence="1">Belongs to the bacterial ribosomal protein bL12 family.</text>
</comment>
<sequence>MADLAKIVDDLSKLTVLEAAELSKLLEEKWGVSAAAPVAVAAAGGAAAAAAPAEEKTEFDVVLTDAGAQKINVIKEVRAITGLGLKEAKDLVEAAPKPVKEGVSKADADKFKAQLEAAGAKVDLK</sequence>
<feature type="chain" id="PRO_0000157566" description="Large ribosomal subunit protein bL12">
    <location>
        <begin position="1"/>
        <end position="125"/>
    </location>
</feature>
<reference key="1">
    <citation type="journal article" date="2000" name="DNA Res.">
        <title>Complete genome structure of the nitrogen-fixing symbiotic bacterium Mesorhizobium loti.</title>
        <authorList>
            <person name="Kaneko T."/>
            <person name="Nakamura Y."/>
            <person name="Sato S."/>
            <person name="Asamizu E."/>
            <person name="Kato T."/>
            <person name="Sasamoto S."/>
            <person name="Watanabe A."/>
            <person name="Idesawa K."/>
            <person name="Ishikawa A."/>
            <person name="Kawashima K."/>
            <person name="Kimura T."/>
            <person name="Kishida Y."/>
            <person name="Kiyokawa C."/>
            <person name="Kohara M."/>
            <person name="Matsumoto M."/>
            <person name="Matsuno A."/>
            <person name="Mochizuki Y."/>
            <person name="Nakayama S."/>
            <person name="Nakazaki N."/>
            <person name="Shimpo S."/>
            <person name="Sugimoto M."/>
            <person name="Takeuchi C."/>
            <person name="Yamada M."/>
            <person name="Tabata S."/>
        </authorList>
    </citation>
    <scope>NUCLEOTIDE SEQUENCE [LARGE SCALE GENOMIC DNA]</scope>
    <source>
        <strain>LMG 29417 / CECT 9101 / MAFF 303099</strain>
    </source>
</reference>